<organism>
    <name type="scientific">Drosophila melanogaster</name>
    <name type="common">Fruit fly</name>
    <dbReference type="NCBI Taxonomy" id="7227"/>
    <lineage>
        <taxon>Eukaryota</taxon>
        <taxon>Metazoa</taxon>
        <taxon>Ecdysozoa</taxon>
        <taxon>Arthropoda</taxon>
        <taxon>Hexapoda</taxon>
        <taxon>Insecta</taxon>
        <taxon>Pterygota</taxon>
        <taxon>Neoptera</taxon>
        <taxon>Endopterygota</taxon>
        <taxon>Diptera</taxon>
        <taxon>Brachycera</taxon>
        <taxon>Muscomorpha</taxon>
        <taxon>Ephydroidea</taxon>
        <taxon>Drosophilidae</taxon>
        <taxon>Drosophila</taxon>
        <taxon>Sophophora</taxon>
    </lineage>
</organism>
<comment type="subcellular location">
    <subcellularLocation>
        <location evidence="2">Nucleus</location>
    </subcellularLocation>
</comment>
<comment type="similarity">
    <text evidence="2">Belongs to the AMY1 family.</text>
</comment>
<protein>
    <recommendedName>
        <fullName>c-Myc-binding protein homolog</fullName>
    </recommendedName>
</protein>
<gene>
    <name type="ORF">CG17202</name>
</gene>
<dbReference type="EMBL" id="AE014297">
    <property type="protein sequence ID" value="AAF54809.2"/>
    <property type="molecule type" value="Genomic_DNA"/>
</dbReference>
<dbReference type="EMBL" id="AY094915">
    <property type="protein sequence ID" value="AAM11268.1"/>
    <property type="molecule type" value="mRNA"/>
</dbReference>
<dbReference type="RefSeq" id="NP_650194.1">
    <property type="nucleotide sequence ID" value="NM_141937.2"/>
</dbReference>
<dbReference type="SMR" id="Q9VG76"/>
<dbReference type="FunCoup" id="Q9VG76">
    <property type="interactions" value="516"/>
</dbReference>
<dbReference type="STRING" id="7227.FBpp0082059"/>
<dbReference type="GlyGen" id="Q9VG76">
    <property type="glycosylation" value="1 site"/>
</dbReference>
<dbReference type="PaxDb" id="7227-FBpp0082059"/>
<dbReference type="DNASU" id="41526"/>
<dbReference type="EnsemblMetazoa" id="FBtr0082587">
    <property type="protein sequence ID" value="FBpp0082059"/>
    <property type="gene ID" value="FBgn0038043"/>
</dbReference>
<dbReference type="GeneID" id="41526"/>
<dbReference type="KEGG" id="dme:Dmel_CG17202"/>
<dbReference type="UCSC" id="CG17202-RA">
    <property type="organism name" value="d. melanogaster"/>
</dbReference>
<dbReference type="AGR" id="FB:FBgn0038043"/>
<dbReference type="FlyBase" id="FBgn0038043">
    <property type="gene designation" value="CG17202"/>
</dbReference>
<dbReference type="VEuPathDB" id="VectorBase:FBgn0038043"/>
<dbReference type="eggNOG" id="ENOG502S2IC">
    <property type="taxonomic scope" value="Eukaryota"/>
</dbReference>
<dbReference type="HOGENOM" id="CLU_1449150_0_0_1"/>
<dbReference type="InParanoid" id="Q9VG76"/>
<dbReference type="OMA" id="PENPMDY"/>
<dbReference type="OrthoDB" id="524165at2759"/>
<dbReference type="PhylomeDB" id="Q9VG76"/>
<dbReference type="BioGRID-ORCS" id="41526">
    <property type="hits" value="0 hits in 1 CRISPR screen"/>
</dbReference>
<dbReference type="GenomeRNAi" id="41526"/>
<dbReference type="PRO" id="PR:Q9VG76"/>
<dbReference type="Proteomes" id="UP000000803">
    <property type="component" value="Chromosome 3R"/>
</dbReference>
<dbReference type="Bgee" id="FBgn0038043">
    <property type="expression patterns" value="Expressed in adult class III enteroendocrine cell in adult midgut (Drosophila) and 159 other cell types or tissues"/>
</dbReference>
<dbReference type="GO" id="GO:0005634">
    <property type="term" value="C:nucleus"/>
    <property type="evidence" value="ECO:0000250"/>
    <property type="project" value="UniProtKB"/>
</dbReference>
<dbReference type="GO" id="GO:0003713">
    <property type="term" value="F:transcription coactivator activity"/>
    <property type="evidence" value="ECO:0000318"/>
    <property type="project" value="GO_Central"/>
</dbReference>
<dbReference type="GO" id="GO:0006355">
    <property type="term" value="P:regulation of DNA-templated transcription"/>
    <property type="evidence" value="ECO:0000318"/>
    <property type="project" value="GO_Central"/>
</dbReference>
<dbReference type="InterPro" id="IPR026060">
    <property type="entry name" value="AMY1"/>
</dbReference>
<dbReference type="PANTHER" id="PTHR13168">
    <property type="entry name" value="ASSOCIATE OF C-MYC AMY-1"/>
    <property type="match status" value="1"/>
</dbReference>
<dbReference type="PANTHER" id="PTHR13168:SF0">
    <property type="entry name" value="C-MYC-BINDING PROTEIN"/>
    <property type="match status" value="1"/>
</dbReference>
<dbReference type="SUPFAM" id="SSF47391">
    <property type="entry name" value="Dimerization-anchoring domain of cAMP-dependent PK regulatory subunit"/>
    <property type="match status" value="1"/>
</dbReference>
<reference key="1">
    <citation type="journal article" date="2000" name="Science">
        <title>The genome sequence of Drosophila melanogaster.</title>
        <authorList>
            <person name="Adams M.D."/>
            <person name="Celniker S.E."/>
            <person name="Holt R.A."/>
            <person name="Evans C.A."/>
            <person name="Gocayne J.D."/>
            <person name="Amanatides P.G."/>
            <person name="Scherer S.E."/>
            <person name="Li P.W."/>
            <person name="Hoskins R.A."/>
            <person name="Galle R.F."/>
            <person name="George R.A."/>
            <person name="Lewis S.E."/>
            <person name="Richards S."/>
            <person name="Ashburner M."/>
            <person name="Henderson S.N."/>
            <person name="Sutton G.G."/>
            <person name="Wortman J.R."/>
            <person name="Yandell M.D."/>
            <person name="Zhang Q."/>
            <person name="Chen L.X."/>
            <person name="Brandon R.C."/>
            <person name="Rogers Y.-H.C."/>
            <person name="Blazej R.G."/>
            <person name="Champe M."/>
            <person name="Pfeiffer B.D."/>
            <person name="Wan K.H."/>
            <person name="Doyle C."/>
            <person name="Baxter E.G."/>
            <person name="Helt G."/>
            <person name="Nelson C.R."/>
            <person name="Miklos G.L.G."/>
            <person name="Abril J.F."/>
            <person name="Agbayani A."/>
            <person name="An H.-J."/>
            <person name="Andrews-Pfannkoch C."/>
            <person name="Baldwin D."/>
            <person name="Ballew R.M."/>
            <person name="Basu A."/>
            <person name="Baxendale J."/>
            <person name="Bayraktaroglu L."/>
            <person name="Beasley E.M."/>
            <person name="Beeson K.Y."/>
            <person name="Benos P.V."/>
            <person name="Berman B.P."/>
            <person name="Bhandari D."/>
            <person name="Bolshakov S."/>
            <person name="Borkova D."/>
            <person name="Botchan M.R."/>
            <person name="Bouck J."/>
            <person name="Brokstein P."/>
            <person name="Brottier P."/>
            <person name="Burtis K.C."/>
            <person name="Busam D.A."/>
            <person name="Butler H."/>
            <person name="Cadieu E."/>
            <person name="Center A."/>
            <person name="Chandra I."/>
            <person name="Cherry J.M."/>
            <person name="Cawley S."/>
            <person name="Dahlke C."/>
            <person name="Davenport L.B."/>
            <person name="Davies P."/>
            <person name="de Pablos B."/>
            <person name="Delcher A."/>
            <person name="Deng Z."/>
            <person name="Mays A.D."/>
            <person name="Dew I."/>
            <person name="Dietz S.M."/>
            <person name="Dodson K."/>
            <person name="Doup L.E."/>
            <person name="Downes M."/>
            <person name="Dugan-Rocha S."/>
            <person name="Dunkov B.C."/>
            <person name="Dunn P."/>
            <person name="Durbin K.J."/>
            <person name="Evangelista C.C."/>
            <person name="Ferraz C."/>
            <person name="Ferriera S."/>
            <person name="Fleischmann W."/>
            <person name="Fosler C."/>
            <person name="Gabrielian A.E."/>
            <person name="Garg N.S."/>
            <person name="Gelbart W.M."/>
            <person name="Glasser K."/>
            <person name="Glodek A."/>
            <person name="Gong F."/>
            <person name="Gorrell J.H."/>
            <person name="Gu Z."/>
            <person name="Guan P."/>
            <person name="Harris M."/>
            <person name="Harris N.L."/>
            <person name="Harvey D.A."/>
            <person name="Heiman T.J."/>
            <person name="Hernandez J.R."/>
            <person name="Houck J."/>
            <person name="Hostin D."/>
            <person name="Houston K.A."/>
            <person name="Howland T.J."/>
            <person name="Wei M.-H."/>
            <person name="Ibegwam C."/>
            <person name="Jalali M."/>
            <person name="Kalush F."/>
            <person name="Karpen G.H."/>
            <person name="Ke Z."/>
            <person name="Kennison J.A."/>
            <person name="Ketchum K.A."/>
            <person name="Kimmel B.E."/>
            <person name="Kodira C.D."/>
            <person name="Kraft C.L."/>
            <person name="Kravitz S."/>
            <person name="Kulp D."/>
            <person name="Lai Z."/>
            <person name="Lasko P."/>
            <person name="Lei Y."/>
            <person name="Levitsky A.A."/>
            <person name="Li J.H."/>
            <person name="Li Z."/>
            <person name="Liang Y."/>
            <person name="Lin X."/>
            <person name="Liu X."/>
            <person name="Mattei B."/>
            <person name="McIntosh T.C."/>
            <person name="McLeod M.P."/>
            <person name="McPherson D."/>
            <person name="Merkulov G."/>
            <person name="Milshina N.V."/>
            <person name="Mobarry C."/>
            <person name="Morris J."/>
            <person name="Moshrefi A."/>
            <person name="Mount S.M."/>
            <person name="Moy M."/>
            <person name="Murphy B."/>
            <person name="Murphy L."/>
            <person name="Muzny D.M."/>
            <person name="Nelson D.L."/>
            <person name="Nelson D.R."/>
            <person name="Nelson K.A."/>
            <person name="Nixon K."/>
            <person name="Nusskern D.R."/>
            <person name="Pacleb J.M."/>
            <person name="Palazzolo M."/>
            <person name="Pittman G.S."/>
            <person name="Pan S."/>
            <person name="Pollard J."/>
            <person name="Puri V."/>
            <person name="Reese M.G."/>
            <person name="Reinert K."/>
            <person name="Remington K."/>
            <person name="Saunders R.D.C."/>
            <person name="Scheeler F."/>
            <person name="Shen H."/>
            <person name="Shue B.C."/>
            <person name="Siden-Kiamos I."/>
            <person name="Simpson M."/>
            <person name="Skupski M.P."/>
            <person name="Smith T.J."/>
            <person name="Spier E."/>
            <person name="Spradling A.C."/>
            <person name="Stapleton M."/>
            <person name="Strong R."/>
            <person name="Sun E."/>
            <person name="Svirskas R."/>
            <person name="Tector C."/>
            <person name="Turner R."/>
            <person name="Venter E."/>
            <person name="Wang A.H."/>
            <person name="Wang X."/>
            <person name="Wang Z.-Y."/>
            <person name="Wassarman D.A."/>
            <person name="Weinstock G.M."/>
            <person name="Weissenbach J."/>
            <person name="Williams S.M."/>
            <person name="Woodage T."/>
            <person name="Worley K.C."/>
            <person name="Wu D."/>
            <person name="Yang S."/>
            <person name="Yao Q.A."/>
            <person name="Ye J."/>
            <person name="Yeh R.-F."/>
            <person name="Zaveri J.S."/>
            <person name="Zhan M."/>
            <person name="Zhang G."/>
            <person name="Zhao Q."/>
            <person name="Zheng L."/>
            <person name="Zheng X.H."/>
            <person name="Zhong F.N."/>
            <person name="Zhong W."/>
            <person name="Zhou X."/>
            <person name="Zhu S.C."/>
            <person name="Zhu X."/>
            <person name="Smith H.O."/>
            <person name="Gibbs R.A."/>
            <person name="Myers E.W."/>
            <person name="Rubin G.M."/>
            <person name="Venter J.C."/>
        </authorList>
    </citation>
    <scope>NUCLEOTIDE SEQUENCE [LARGE SCALE GENOMIC DNA]</scope>
    <source>
        <strain>Berkeley</strain>
    </source>
</reference>
<reference key="2">
    <citation type="journal article" date="2002" name="Genome Biol.">
        <title>Annotation of the Drosophila melanogaster euchromatic genome: a systematic review.</title>
        <authorList>
            <person name="Misra S."/>
            <person name="Crosby M.A."/>
            <person name="Mungall C.J."/>
            <person name="Matthews B.B."/>
            <person name="Campbell K.S."/>
            <person name="Hradecky P."/>
            <person name="Huang Y."/>
            <person name="Kaminker J.S."/>
            <person name="Millburn G.H."/>
            <person name="Prochnik S.E."/>
            <person name="Smith C.D."/>
            <person name="Tupy J.L."/>
            <person name="Whitfield E.J."/>
            <person name="Bayraktaroglu L."/>
            <person name="Berman B.P."/>
            <person name="Bettencourt B.R."/>
            <person name="Celniker S.E."/>
            <person name="de Grey A.D.N.J."/>
            <person name="Drysdale R.A."/>
            <person name="Harris N.L."/>
            <person name="Richter J."/>
            <person name="Russo S."/>
            <person name="Schroeder A.J."/>
            <person name="Shu S.Q."/>
            <person name="Stapleton M."/>
            <person name="Yamada C."/>
            <person name="Ashburner M."/>
            <person name="Gelbart W.M."/>
            <person name="Rubin G.M."/>
            <person name="Lewis S.E."/>
        </authorList>
    </citation>
    <scope>GENOME REANNOTATION</scope>
    <source>
        <strain>Berkeley</strain>
    </source>
</reference>
<reference key="3">
    <citation type="journal article" date="2002" name="Genome Biol.">
        <title>A Drosophila full-length cDNA resource.</title>
        <authorList>
            <person name="Stapleton M."/>
            <person name="Carlson J.W."/>
            <person name="Brokstein P."/>
            <person name="Yu C."/>
            <person name="Champe M."/>
            <person name="George R.A."/>
            <person name="Guarin H."/>
            <person name="Kronmiller B."/>
            <person name="Pacleb J.M."/>
            <person name="Park S."/>
            <person name="Wan K.H."/>
            <person name="Rubin G.M."/>
            <person name="Celniker S.E."/>
        </authorList>
    </citation>
    <scope>NUCLEOTIDE SEQUENCE [LARGE SCALE MRNA]</scope>
    <source>
        <strain>Berkeley</strain>
        <tissue>Head</tissue>
    </source>
</reference>
<feature type="chain" id="PRO_0000220982" description="c-Myc-binding protein homolog">
    <location>
        <begin position="1"/>
        <end position="181"/>
    </location>
</feature>
<feature type="region of interest" description="Disordered" evidence="1">
    <location>
        <begin position="111"/>
        <end position="145"/>
    </location>
</feature>
<feature type="region of interest" description="Disordered" evidence="1">
    <location>
        <begin position="159"/>
        <end position="181"/>
    </location>
</feature>
<feature type="compositionally biased region" description="Low complexity" evidence="1">
    <location>
        <begin position="111"/>
        <end position="127"/>
    </location>
</feature>
<feature type="compositionally biased region" description="Polar residues" evidence="1">
    <location>
        <begin position="168"/>
        <end position="181"/>
    </location>
</feature>
<accession>Q9VG76</accession>
<accession>Q8SX10</accession>
<keyword id="KW-0539">Nucleus</keyword>
<keyword id="KW-1185">Reference proteome</keyword>
<proteinExistence type="evidence at transcript level"/>
<evidence type="ECO:0000256" key="1">
    <source>
        <dbReference type="SAM" id="MobiDB-lite"/>
    </source>
</evidence>
<evidence type="ECO:0000305" key="2"/>
<name>MYCBP_DROME</name>
<sequence>MSFKPIDPKRDEIRRYLERGSVLDSLTKLFIRVIKERPENPMDYIRNHIGVVRHQHDKYERLQQDLQLANEEIQRLRAIINGINPDVLQGHQPVASSEVVVATEAPQTVAESTEAAEQQQQQQQQENGETELEKPNESSADVAEITAAVEACQIEGNSVVTTDEAAQPSPTVQAEASGSSE</sequence>